<evidence type="ECO:0000255" key="1">
    <source>
        <dbReference type="HAMAP-Rule" id="MF_01717"/>
    </source>
</evidence>
<evidence type="ECO:0000256" key="2">
    <source>
        <dbReference type="SAM" id="MobiDB-lite"/>
    </source>
</evidence>
<keyword id="KW-0067">ATP-binding</keyword>
<keyword id="KW-0997">Cell inner membrane</keyword>
<keyword id="KW-1003">Cell membrane</keyword>
<keyword id="KW-0472">Membrane</keyword>
<keyword id="KW-0547">Nucleotide-binding</keyword>
<keyword id="KW-0677">Repeat</keyword>
<keyword id="KW-0762">Sugar transport</keyword>
<keyword id="KW-1278">Translocase</keyword>
<keyword id="KW-0813">Transport</keyword>
<reference key="1">
    <citation type="journal article" date="2005" name="Proc. Natl. Acad. Sci. U.S.A.">
        <title>Comparison of the complete genome sequences of Pseudomonas syringae pv. syringae B728a and pv. tomato DC3000.</title>
        <authorList>
            <person name="Feil H."/>
            <person name="Feil W.S."/>
            <person name="Chain P."/>
            <person name="Larimer F."/>
            <person name="Dibartolo G."/>
            <person name="Copeland A."/>
            <person name="Lykidis A."/>
            <person name="Trong S."/>
            <person name="Nolan M."/>
            <person name="Goltsman E."/>
            <person name="Thiel J."/>
            <person name="Malfatti S."/>
            <person name="Loper J.E."/>
            <person name="Lapidus A."/>
            <person name="Detter J.C."/>
            <person name="Land M."/>
            <person name="Richardson P.M."/>
            <person name="Kyrpides N.C."/>
            <person name="Ivanova N."/>
            <person name="Lindow S.E."/>
        </authorList>
    </citation>
    <scope>NUCLEOTIDE SEQUENCE [LARGE SCALE GENOMIC DNA]</scope>
    <source>
        <strain>B728a</strain>
    </source>
</reference>
<protein>
    <recommendedName>
        <fullName evidence="1">Putative ribose/galactose/methyl galactoside import ATP-binding protein</fullName>
        <ecNumber evidence="1">7.5.2.11</ecNumber>
        <ecNumber evidence="1">7.5.2.7</ecNumber>
    </recommendedName>
</protein>
<name>RGMG_PSEU2</name>
<comment type="function">
    <text evidence="1">Part of an ABC transporter complex involved in carbohydrate import. Could be involved in ribose, galactose and/or methyl galactoside import. Responsible for energy coupling to the transport system.</text>
</comment>
<comment type="catalytic activity">
    <reaction evidence="1">
        <text>D-ribose(out) + ATP + H2O = D-ribose(in) + ADP + phosphate + H(+)</text>
        <dbReference type="Rhea" id="RHEA:29903"/>
        <dbReference type="ChEBI" id="CHEBI:15377"/>
        <dbReference type="ChEBI" id="CHEBI:15378"/>
        <dbReference type="ChEBI" id="CHEBI:30616"/>
        <dbReference type="ChEBI" id="CHEBI:43474"/>
        <dbReference type="ChEBI" id="CHEBI:47013"/>
        <dbReference type="ChEBI" id="CHEBI:456216"/>
        <dbReference type="EC" id="7.5.2.7"/>
    </reaction>
</comment>
<comment type="catalytic activity">
    <reaction evidence="1">
        <text>D-galactose(out) + ATP + H2O = D-galactose(in) + ADP + phosphate + H(+)</text>
        <dbReference type="Rhea" id="RHEA:60156"/>
        <dbReference type="ChEBI" id="CHEBI:4139"/>
        <dbReference type="ChEBI" id="CHEBI:15377"/>
        <dbReference type="ChEBI" id="CHEBI:15378"/>
        <dbReference type="ChEBI" id="CHEBI:30616"/>
        <dbReference type="ChEBI" id="CHEBI:43474"/>
        <dbReference type="ChEBI" id="CHEBI:456216"/>
        <dbReference type="EC" id="7.5.2.11"/>
    </reaction>
</comment>
<comment type="subcellular location">
    <subcellularLocation>
        <location evidence="1">Cell inner membrane</location>
        <topology evidence="1">Peripheral membrane protein</topology>
    </subcellularLocation>
</comment>
<comment type="similarity">
    <text evidence="1">Belongs to the ABC transporter superfamily. Carbohydrate importer 2 (CUT2) (TC 3.A.1.2) family.</text>
</comment>
<feature type="chain" id="PRO_0000262985" description="Putative ribose/galactose/methyl galactoside import ATP-binding protein">
    <location>
        <begin position="1"/>
        <end position="525"/>
    </location>
</feature>
<feature type="domain" description="ABC transporter 1" evidence="1">
    <location>
        <begin position="33"/>
        <end position="269"/>
    </location>
</feature>
<feature type="domain" description="ABC transporter 2" evidence="1">
    <location>
        <begin position="279"/>
        <end position="523"/>
    </location>
</feature>
<feature type="region of interest" description="Disordered" evidence="2">
    <location>
        <begin position="1"/>
        <end position="23"/>
    </location>
</feature>
<feature type="compositionally biased region" description="Polar residues" evidence="2">
    <location>
        <begin position="1"/>
        <end position="15"/>
    </location>
</feature>
<feature type="binding site" evidence="1">
    <location>
        <begin position="65"/>
        <end position="72"/>
    </location>
    <ligand>
        <name>ATP</name>
        <dbReference type="ChEBI" id="CHEBI:30616"/>
    </ligand>
</feature>
<sequence length="525" mass="57188">MFGSATANPPAQRNLPSGDGDGGAPDAQAPYLLEISHVSKGFPGVVALNDVQLRVRPGSVLALMGENGAGKSTLMKIIAGIYQPDAGEIRLRGKPVSFDTPLSALQAGIAMIHQELNLMPFMSIAENIWIGREQLNGLHMVDHREMHRCTAELLERLRIKLDPEELVGTLSIAERQMVEIAKAVSYNSDVLIMDEPTSAITETEVAHLFSIISDLRAQGKGIIYITHKMNEVFEIADEVAVFRDGAYIGLQRADSMDGDSLITMMVGRELTQLFPEREKPAGDVLLSVNRLSLNGIFKDVSFDLRAGEVLGIAGLMGSGRTNVAETLFGITPSDSGEVRFDGKTVHIGDPHQAIELGFALLTEDRKLTGLFPCLSVMENMEMAVLANYAGNGFVQQKALRSQCEDMCKKLRVKTPSLEQCIDTLSGGNQQKALLARWLMTNPKVLILDEPTRGIDVGAKVEIYRLISLLASEGMAVIMISSELPEVLGMSDRVMVMHEGEMMGILDRSEATQEKVMHLASGHKVH</sequence>
<dbReference type="EC" id="7.5.2.11" evidence="1"/>
<dbReference type="EC" id="7.5.2.7" evidence="1"/>
<dbReference type="EMBL" id="CP000075">
    <property type="protein sequence ID" value="AAY38296.1"/>
    <property type="molecule type" value="Genomic_DNA"/>
</dbReference>
<dbReference type="RefSeq" id="WP_011268315.1">
    <property type="nucleotide sequence ID" value="NC_007005.1"/>
</dbReference>
<dbReference type="RefSeq" id="YP_236334.1">
    <property type="nucleotide sequence ID" value="NC_007005.1"/>
</dbReference>
<dbReference type="SMR" id="Q4ZRC6"/>
<dbReference type="STRING" id="205918.Psyr_3264"/>
<dbReference type="KEGG" id="psb:Psyr_3264"/>
<dbReference type="PATRIC" id="fig|205918.7.peg.3337"/>
<dbReference type="eggNOG" id="COG1129">
    <property type="taxonomic scope" value="Bacteria"/>
</dbReference>
<dbReference type="HOGENOM" id="CLU_000604_92_3_6"/>
<dbReference type="OrthoDB" id="9776369at2"/>
<dbReference type="Proteomes" id="UP000000426">
    <property type="component" value="Chromosome"/>
</dbReference>
<dbReference type="GO" id="GO:0005886">
    <property type="term" value="C:plasma membrane"/>
    <property type="evidence" value="ECO:0007669"/>
    <property type="project" value="UniProtKB-SubCell"/>
</dbReference>
<dbReference type="GO" id="GO:0015611">
    <property type="term" value="F:ABC-type D-ribose transporter activity"/>
    <property type="evidence" value="ECO:0007669"/>
    <property type="project" value="UniProtKB-EC"/>
</dbReference>
<dbReference type="GO" id="GO:0005524">
    <property type="term" value="F:ATP binding"/>
    <property type="evidence" value="ECO:0007669"/>
    <property type="project" value="UniProtKB-KW"/>
</dbReference>
<dbReference type="GO" id="GO:0016887">
    <property type="term" value="F:ATP hydrolysis activity"/>
    <property type="evidence" value="ECO:0007669"/>
    <property type="project" value="InterPro"/>
</dbReference>
<dbReference type="CDD" id="cd03216">
    <property type="entry name" value="ABC_Carb_Monos_I"/>
    <property type="match status" value="1"/>
</dbReference>
<dbReference type="CDD" id="cd03215">
    <property type="entry name" value="ABC_Carb_Monos_II"/>
    <property type="match status" value="1"/>
</dbReference>
<dbReference type="FunFam" id="3.40.50.300:FF:000126">
    <property type="entry name" value="Galactose/methyl galactoside import ATP-binding protein MglA"/>
    <property type="match status" value="1"/>
</dbReference>
<dbReference type="FunFam" id="3.40.50.300:FF:000127">
    <property type="entry name" value="Ribose import ATP-binding protein RbsA"/>
    <property type="match status" value="1"/>
</dbReference>
<dbReference type="Gene3D" id="3.40.50.300">
    <property type="entry name" value="P-loop containing nucleotide triphosphate hydrolases"/>
    <property type="match status" value="2"/>
</dbReference>
<dbReference type="InterPro" id="IPR003593">
    <property type="entry name" value="AAA+_ATPase"/>
</dbReference>
<dbReference type="InterPro" id="IPR050107">
    <property type="entry name" value="ABC_carbohydrate_import_ATPase"/>
</dbReference>
<dbReference type="InterPro" id="IPR003439">
    <property type="entry name" value="ABC_transporter-like_ATP-bd"/>
</dbReference>
<dbReference type="InterPro" id="IPR017871">
    <property type="entry name" value="ABC_transporter-like_CS"/>
</dbReference>
<dbReference type="InterPro" id="IPR027417">
    <property type="entry name" value="P-loop_NTPase"/>
</dbReference>
<dbReference type="PANTHER" id="PTHR43790">
    <property type="entry name" value="CARBOHYDRATE TRANSPORT ATP-BINDING PROTEIN MG119-RELATED"/>
    <property type="match status" value="1"/>
</dbReference>
<dbReference type="PANTHER" id="PTHR43790:SF7">
    <property type="entry name" value="GALACTOSE_METHYL GALACTOSIDE IMPORT ATP-BINDING PROTEIN MGLA"/>
    <property type="match status" value="1"/>
</dbReference>
<dbReference type="Pfam" id="PF00005">
    <property type="entry name" value="ABC_tran"/>
    <property type="match status" value="2"/>
</dbReference>
<dbReference type="SMART" id="SM00382">
    <property type="entry name" value="AAA"/>
    <property type="match status" value="2"/>
</dbReference>
<dbReference type="SUPFAM" id="SSF52540">
    <property type="entry name" value="P-loop containing nucleoside triphosphate hydrolases"/>
    <property type="match status" value="2"/>
</dbReference>
<dbReference type="PROSITE" id="PS00211">
    <property type="entry name" value="ABC_TRANSPORTER_1"/>
    <property type="match status" value="1"/>
</dbReference>
<dbReference type="PROSITE" id="PS50893">
    <property type="entry name" value="ABC_TRANSPORTER_2"/>
    <property type="match status" value="2"/>
</dbReference>
<dbReference type="PROSITE" id="PS51260">
    <property type="entry name" value="MGLA"/>
    <property type="match status" value="1"/>
</dbReference>
<dbReference type="PROSITE" id="PS51254">
    <property type="entry name" value="RBSA"/>
    <property type="match status" value="1"/>
</dbReference>
<gene>
    <name type="ordered locus">Psyr_3264</name>
</gene>
<accession>Q4ZRC6</accession>
<proteinExistence type="inferred from homology"/>
<organism>
    <name type="scientific">Pseudomonas syringae pv. syringae (strain B728a)</name>
    <dbReference type="NCBI Taxonomy" id="205918"/>
    <lineage>
        <taxon>Bacteria</taxon>
        <taxon>Pseudomonadati</taxon>
        <taxon>Pseudomonadota</taxon>
        <taxon>Gammaproteobacteria</taxon>
        <taxon>Pseudomonadales</taxon>
        <taxon>Pseudomonadaceae</taxon>
        <taxon>Pseudomonas</taxon>
        <taxon>Pseudomonas syringae</taxon>
    </lineage>
</organism>